<keyword id="KW-0067">ATP-binding</keyword>
<keyword id="KW-0997">Cell inner membrane</keyword>
<keyword id="KW-1003">Cell membrane</keyword>
<keyword id="KW-0406">Ion transport</keyword>
<keyword id="KW-0460">Magnesium</keyword>
<keyword id="KW-0472">Membrane</keyword>
<keyword id="KW-0479">Metal-binding</keyword>
<keyword id="KW-0547">Nucleotide-binding</keyword>
<keyword id="KW-0597">Phosphoprotein</keyword>
<keyword id="KW-0630">Potassium</keyword>
<keyword id="KW-0633">Potassium transport</keyword>
<keyword id="KW-1278">Translocase</keyword>
<keyword id="KW-0812">Transmembrane</keyword>
<keyword id="KW-1133">Transmembrane helix</keyword>
<keyword id="KW-0813">Transport</keyword>
<feature type="chain" id="PRO_1000114959" description="Potassium-transporting ATPase ATP-binding subunit">
    <location>
        <begin position="1"/>
        <end position="682"/>
    </location>
</feature>
<feature type="transmembrane region" description="Helical" evidence="1">
    <location>
        <begin position="34"/>
        <end position="54"/>
    </location>
</feature>
<feature type="transmembrane region" description="Helical" evidence="1">
    <location>
        <begin position="58"/>
        <end position="78"/>
    </location>
</feature>
<feature type="transmembrane region" description="Helical" evidence="1">
    <location>
        <begin position="219"/>
        <end position="239"/>
    </location>
</feature>
<feature type="transmembrane region" description="Helical" evidence="1">
    <location>
        <begin position="254"/>
        <end position="274"/>
    </location>
</feature>
<feature type="transmembrane region" description="Helical" evidence="1">
    <location>
        <begin position="588"/>
        <end position="608"/>
    </location>
</feature>
<feature type="transmembrane region" description="Helical" evidence="1">
    <location>
        <begin position="616"/>
        <end position="636"/>
    </location>
</feature>
<feature type="transmembrane region" description="Helical" evidence="1">
    <location>
        <begin position="662"/>
        <end position="682"/>
    </location>
</feature>
<feature type="active site" description="4-aspartylphosphate intermediate" evidence="1">
    <location>
        <position position="307"/>
    </location>
</feature>
<feature type="binding site" evidence="1">
    <location>
        <position position="344"/>
    </location>
    <ligand>
        <name>ATP</name>
        <dbReference type="ChEBI" id="CHEBI:30616"/>
    </ligand>
</feature>
<feature type="binding site" evidence="1">
    <location>
        <position position="348"/>
    </location>
    <ligand>
        <name>ATP</name>
        <dbReference type="ChEBI" id="CHEBI:30616"/>
    </ligand>
</feature>
<feature type="binding site" evidence="1">
    <location>
        <begin position="377"/>
        <end position="384"/>
    </location>
    <ligand>
        <name>ATP</name>
        <dbReference type="ChEBI" id="CHEBI:30616"/>
    </ligand>
</feature>
<feature type="binding site" evidence="1">
    <location>
        <position position="395"/>
    </location>
    <ligand>
        <name>ATP</name>
        <dbReference type="ChEBI" id="CHEBI:30616"/>
    </ligand>
</feature>
<feature type="binding site" evidence="1">
    <location>
        <position position="518"/>
    </location>
    <ligand>
        <name>Mg(2+)</name>
        <dbReference type="ChEBI" id="CHEBI:18420"/>
    </ligand>
</feature>
<feature type="binding site" evidence="1">
    <location>
        <position position="522"/>
    </location>
    <ligand>
        <name>Mg(2+)</name>
        <dbReference type="ChEBI" id="CHEBI:18420"/>
    </ligand>
</feature>
<sequence>MSRKQLALFEPVLLVQALTDAVKKLSPRAQWRNPVMFVVWAGSVLTTLLTLAMVTGQIAGSALFTGIISLWLWFTVLFANFAEALAEGRSKAQANSLKGVKKTAFARRLRAPRHDAQADNVPAAELRKGDIVLVKAGDIIPCDGEVIEGGASVDESAITGESAPVIRESGGDFASVTGGTRILSDWLVIACSVNPGETFLDRMIAMVEGAQRRKTPNEIALTILLIALTIVFLLATATLWPFSAWGGNAVSVTVLVALLVCLIPTTIGGLLSAIGVAGMSRMLGANVIATSGRAVEAAGDVDVLLLDKTGTITLGNRQASDFIPARGVDERTLADAAQLASLADETPEGRSIVILAKQRFNLRERDVQSLHATFVPFTAQSRMSGINIDNRMIRKGSVDAIRRHVESNGGHFPADVEQNVENVARLGATPLVVVEGARVLGVIALKDIVKGGIKERFAQLRKMGIKTVMITGDNRLTAAAIAAEAGVDDFLAEATPEAKLALIRQYQAEGRLVAMTGDGTNDAPALAQADVAVAMNSGTQAAKEAGNMVDLDSNPTKLIEVVHIGKQMLMTRGSLTTFSIANDVAKYFAIIPAAFAATYPQLNALNVMGLHSPNSAILSAVIFNALIIIFLIPLALKGVSYKPLSASAMLRRNLWIYGLGGLVVPFIGIKVIDVLLTLLGLA</sequence>
<accession>B5QWE9</accession>
<comment type="function">
    <text evidence="1">Part of the high-affinity ATP-driven potassium transport (or Kdp) system, which catalyzes the hydrolysis of ATP coupled with the electrogenic transport of potassium into the cytoplasm. This subunit is responsible for energy coupling to the transport system and for the release of the potassium ions to the cytoplasm.</text>
</comment>
<comment type="catalytic activity">
    <reaction evidence="1">
        <text>K(+)(out) + ATP + H2O = K(+)(in) + ADP + phosphate + H(+)</text>
        <dbReference type="Rhea" id="RHEA:16777"/>
        <dbReference type="ChEBI" id="CHEBI:15377"/>
        <dbReference type="ChEBI" id="CHEBI:15378"/>
        <dbReference type="ChEBI" id="CHEBI:29103"/>
        <dbReference type="ChEBI" id="CHEBI:30616"/>
        <dbReference type="ChEBI" id="CHEBI:43474"/>
        <dbReference type="ChEBI" id="CHEBI:456216"/>
        <dbReference type="EC" id="7.2.2.6"/>
    </reaction>
    <physiologicalReaction direction="left-to-right" evidence="1">
        <dbReference type="Rhea" id="RHEA:16778"/>
    </physiologicalReaction>
</comment>
<comment type="subunit">
    <text evidence="1">The system is composed of three essential subunits: KdpA, KdpB and KdpC.</text>
</comment>
<comment type="subcellular location">
    <subcellularLocation>
        <location evidence="1">Cell inner membrane</location>
        <topology evidence="1">Multi-pass membrane protein</topology>
    </subcellularLocation>
</comment>
<comment type="similarity">
    <text evidence="1">Belongs to the cation transport ATPase (P-type) (TC 3.A.3) family. Type IA subfamily.</text>
</comment>
<protein>
    <recommendedName>
        <fullName evidence="1">Potassium-transporting ATPase ATP-binding subunit</fullName>
        <ecNumber evidence="1">7.2.2.6</ecNumber>
    </recommendedName>
    <alternativeName>
        <fullName evidence="1">ATP phosphohydrolase [potassium-transporting] B chain</fullName>
    </alternativeName>
    <alternativeName>
        <fullName evidence="1">Potassium-binding and translocating subunit B</fullName>
    </alternativeName>
    <alternativeName>
        <fullName evidence="1">Potassium-translocating ATPase B chain</fullName>
    </alternativeName>
</protein>
<proteinExistence type="inferred from homology"/>
<dbReference type="EC" id="7.2.2.6" evidence="1"/>
<dbReference type="EMBL" id="AM933172">
    <property type="protein sequence ID" value="CAR32255.1"/>
    <property type="molecule type" value="Genomic_DNA"/>
</dbReference>
<dbReference type="RefSeq" id="WP_000088026.1">
    <property type="nucleotide sequence ID" value="NC_011294.1"/>
</dbReference>
<dbReference type="SMR" id="B5QWE9"/>
<dbReference type="KEGG" id="set:SEN0669"/>
<dbReference type="HOGENOM" id="CLU_025728_2_0_6"/>
<dbReference type="Proteomes" id="UP000000613">
    <property type="component" value="Chromosome"/>
</dbReference>
<dbReference type="GO" id="GO:0005886">
    <property type="term" value="C:plasma membrane"/>
    <property type="evidence" value="ECO:0007669"/>
    <property type="project" value="UniProtKB-SubCell"/>
</dbReference>
<dbReference type="GO" id="GO:0005524">
    <property type="term" value="F:ATP binding"/>
    <property type="evidence" value="ECO:0007669"/>
    <property type="project" value="UniProtKB-UniRule"/>
</dbReference>
<dbReference type="GO" id="GO:0016887">
    <property type="term" value="F:ATP hydrolysis activity"/>
    <property type="evidence" value="ECO:0007669"/>
    <property type="project" value="InterPro"/>
</dbReference>
<dbReference type="GO" id="GO:0000287">
    <property type="term" value="F:magnesium ion binding"/>
    <property type="evidence" value="ECO:0007669"/>
    <property type="project" value="UniProtKB-UniRule"/>
</dbReference>
<dbReference type="GO" id="GO:0008556">
    <property type="term" value="F:P-type potassium transmembrane transporter activity"/>
    <property type="evidence" value="ECO:0007669"/>
    <property type="project" value="UniProtKB-UniRule"/>
</dbReference>
<dbReference type="CDD" id="cd02078">
    <property type="entry name" value="P-type_ATPase_K"/>
    <property type="match status" value="1"/>
</dbReference>
<dbReference type="FunFam" id="2.70.150.10:FF:000010">
    <property type="entry name" value="Potassium-transporting ATPase ATP-binding subunit"/>
    <property type="match status" value="1"/>
</dbReference>
<dbReference type="FunFam" id="3.40.1110.10:FF:000007">
    <property type="entry name" value="Potassium-transporting ATPase ATP-binding subunit"/>
    <property type="match status" value="1"/>
</dbReference>
<dbReference type="Gene3D" id="3.40.1110.10">
    <property type="entry name" value="Calcium-transporting ATPase, cytoplasmic domain N"/>
    <property type="match status" value="1"/>
</dbReference>
<dbReference type="Gene3D" id="2.70.150.10">
    <property type="entry name" value="Calcium-transporting ATPase, cytoplasmic transduction domain A"/>
    <property type="match status" value="1"/>
</dbReference>
<dbReference type="Gene3D" id="3.40.50.1000">
    <property type="entry name" value="HAD superfamily/HAD-like"/>
    <property type="match status" value="1"/>
</dbReference>
<dbReference type="HAMAP" id="MF_00285">
    <property type="entry name" value="KdpB"/>
    <property type="match status" value="1"/>
</dbReference>
<dbReference type="InterPro" id="IPR023299">
    <property type="entry name" value="ATPase_P-typ_cyto_dom_N"/>
</dbReference>
<dbReference type="InterPro" id="IPR018303">
    <property type="entry name" value="ATPase_P-typ_P_site"/>
</dbReference>
<dbReference type="InterPro" id="IPR023298">
    <property type="entry name" value="ATPase_P-typ_TM_dom_sf"/>
</dbReference>
<dbReference type="InterPro" id="IPR008250">
    <property type="entry name" value="ATPase_P-typ_transduc_dom_A_sf"/>
</dbReference>
<dbReference type="InterPro" id="IPR036412">
    <property type="entry name" value="HAD-like_sf"/>
</dbReference>
<dbReference type="InterPro" id="IPR023214">
    <property type="entry name" value="HAD_sf"/>
</dbReference>
<dbReference type="InterPro" id="IPR006391">
    <property type="entry name" value="P-type_ATPase_bsu_IA"/>
</dbReference>
<dbReference type="InterPro" id="IPR001757">
    <property type="entry name" value="P_typ_ATPase"/>
</dbReference>
<dbReference type="InterPro" id="IPR044492">
    <property type="entry name" value="P_typ_ATPase_HD_dom"/>
</dbReference>
<dbReference type="NCBIfam" id="TIGR01494">
    <property type="entry name" value="ATPase_P-type"/>
    <property type="match status" value="2"/>
</dbReference>
<dbReference type="NCBIfam" id="TIGR01497">
    <property type="entry name" value="kdpB"/>
    <property type="match status" value="1"/>
</dbReference>
<dbReference type="PANTHER" id="PTHR43743">
    <property type="entry name" value="POTASSIUM-TRANSPORTING ATPASE ATP-BINDING SUBUNIT"/>
    <property type="match status" value="1"/>
</dbReference>
<dbReference type="PANTHER" id="PTHR43743:SF1">
    <property type="entry name" value="POTASSIUM-TRANSPORTING ATPASE ATP-BINDING SUBUNIT"/>
    <property type="match status" value="1"/>
</dbReference>
<dbReference type="Pfam" id="PF00122">
    <property type="entry name" value="E1-E2_ATPase"/>
    <property type="match status" value="1"/>
</dbReference>
<dbReference type="Pfam" id="PF00702">
    <property type="entry name" value="Hydrolase"/>
    <property type="match status" value="1"/>
</dbReference>
<dbReference type="PRINTS" id="PR00119">
    <property type="entry name" value="CATATPASE"/>
</dbReference>
<dbReference type="SFLD" id="SFLDS00003">
    <property type="entry name" value="Haloacid_Dehalogenase"/>
    <property type="match status" value="1"/>
</dbReference>
<dbReference type="SFLD" id="SFLDF00027">
    <property type="entry name" value="p-type_atpase"/>
    <property type="match status" value="1"/>
</dbReference>
<dbReference type="SUPFAM" id="SSF81653">
    <property type="entry name" value="Calcium ATPase, transduction domain A"/>
    <property type="match status" value="1"/>
</dbReference>
<dbReference type="SUPFAM" id="SSF81665">
    <property type="entry name" value="Calcium ATPase, transmembrane domain M"/>
    <property type="match status" value="1"/>
</dbReference>
<dbReference type="SUPFAM" id="SSF56784">
    <property type="entry name" value="HAD-like"/>
    <property type="match status" value="1"/>
</dbReference>
<dbReference type="SUPFAM" id="SSF81660">
    <property type="entry name" value="Metal cation-transporting ATPase, ATP-binding domain N"/>
    <property type="match status" value="1"/>
</dbReference>
<dbReference type="PROSITE" id="PS00154">
    <property type="entry name" value="ATPASE_E1_E2"/>
    <property type="match status" value="1"/>
</dbReference>
<gene>
    <name evidence="1" type="primary">kdpB</name>
    <name type="ordered locus">SEN0669</name>
</gene>
<evidence type="ECO:0000255" key="1">
    <source>
        <dbReference type="HAMAP-Rule" id="MF_00285"/>
    </source>
</evidence>
<organism>
    <name type="scientific">Salmonella enteritidis PT4 (strain P125109)</name>
    <dbReference type="NCBI Taxonomy" id="550537"/>
    <lineage>
        <taxon>Bacteria</taxon>
        <taxon>Pseudomonadati</taxon>
        <taxon>Pseudomonadota</taxon>
        <taxon>Gammaproteobacteria</taxon>
        <taxon>Enterobacterales</taxon>
        <taxon>Enterobacteriaceae</taxon>
        <taxon>Salmonella</taxon>
    </lineage>
</organism>
<reference key="1">
    <citation type="journal article" date="2008" name="Genome Res.">
        <title>Comparative genome analysis of Salmonella enteritidis PT4 and Salmonella gallinarum 287/91 provides insights into evolutionary and host adaptation pathways.</title>
        <authorList>
            <person name="Thomson N.R."/>
            <person name="Clayton D.J."/>
            <person name="Windhorst D."/>
            <person name="Vernikos G."/>
            <person name="Davidson S."/>
            <person name="Churcher C."/>
            <person name="Quail M.A."/>
            <person name="Stevens M."/>
            <person name="Jones M.A."/>
            <person name="Watson M."/>
            <person name="Barron A."/>
            <person name="Layton A."/>
            <person name="Pickard D."/>
            <person name="Kingsley R.A."/>
            <person name="Bignell A."/>
            <person name="Clark L."/>
            <person name="Harris B."/>
            <person name="Ormond D."/>
            <person name="Abdellah Z."/>
            <person name="Brooks K."/>
            <person name="Cherevach I."/>
            <person name="Chillingworth T."/>
            <person name="Woodward J."/>
            <person name="Norberczak H."/>
            <person name="Lord A."/>
            <person name="Arrowsmith C."/>
            <person name="Jagels K."/>
            <person name="Moule S."/>
            <person name="Mungall K."/>
            <person name="Saunders M."/>
            <person name="Whitehead S."/>
            <person name="Chabalgoity J.A."/>
            <person name="Maskell D."/>
            <person name="Humphreys T."/>
            <person name="Roberts M."/>
            <person name="Barrow P.A."/>
            <person name="Dougan G."/>
            <person name="Parkhill J."/>
        </authorList>
    </citation>
    <scope>NUCLEOTIDE SEQUENCE [LARGE SCALE GENOMIC DNA]</scope>
    <source>
        <strain>P125109</strain>
    </source>
</reference>
<name>KDPB_SALEP</name>